<feature type="initiator methionine" description="Removed" evidence="1">
    <location>
        <position position="1"/>
    </location>
</feature>
<feature type="chain" id="PRO_0000288526" description="Mitochondrial import receptor subunit TOM70">
    <location>
        <begin position="2"/>
        <end position="610"/>
    </location>
</feature>
<feature type="topological domain" description="Mitochondrial intermembrane" evidence="3">
    <location>
        <begin position="2"/>
        <end position="41"/>
    </location>
</feature>
<feature type="transmembrane region" description="Helical" evidence="3">
    <location>
        <begin position="42"/>
        <end position="62"/>
    </location>
</feature>
<feature type="topological domain" description="Cytoplasmic" evidence="3">
    <location>
        <begin position="63"/>
        <end position="610"/>
    </location>
</feature>
<feature type="repeat" description="TPR 1">
    <location>
        <begin position="116"/>
        <end position="149"/>
    </location>
</feature>
<feature type="repeat" description="TPR 2">
    <location>
        <begin position="155"/>
        <end position="188"/>
    </location>
</feature>
<feature type="repeat" description="TPR 3">
    <location>
        <begin position="296"/>
        <end position="329"/>
    </location>
</feature>
<feature type="repeat" description="TPR 4">
    <location>
        <begin position="331"/>
        <end position="364"/>
    </location>
</feature>
<feature type="repeat" description="TPR 5">
    <location>
        <begin position="369"/>
        <end position="402"/>
    </location>
</feature>
<feature type="repeat" description="TPR 6">
    <location>
        <begin position="403"/>
        <end position="436"/>
    </location>
</feature>
<feature type="repeat" description="TPR 7">
    <location>
        <begin position="444"/>
        <end position="477"/>
    </location>
</feature>
<feature type="repeat" description="TPR 8">
    <location>
        <begin position="478"/>
        <end position="511"/>
    </location>
</feature>
<feature type="repeat" description="TPR 9">
    <location>
        <begin position="513"/>
        <end position="546"/>
    </location>
</feature>
<feature type="repeat" description="TPR 10">
    <location>
        <begin position="547"/>
        <end position="580"/>
    </location>
</feature>
<feature type="region of interest" description="Disordered" evidence="4">
    <location>
        <begin position="69"/>
        <end position="109"/>
    </location>
</feature>
<feature type="compositionally biased region" description="Low complexity" evidence="4">
    <location>
        <begin position="93"/>
        <end position="108"/>
    </location>
</feature>
<feature type="modified residue" description="N-acetylalanine" evidence="1">
    <location>
        <position position="2"/>
    </location>
</feature>
<feature type="modified residue" description="Omega-N-methylarginine" evidence="1">
    <location>
        <position position="74"/>
    </location>
</feature>
<feature type="modified residue" description="Phosphoserine" evidence="9 10">
    <location>
        <position position="94"/>
    </location>
</feature>
<feature type="modified residue" description="Phosphoserine" evidence="1">
    <location>
        <position position="99"/>
    </location>
</feature>
<feature type="modified residue" description="Phosphoserine" evidence="10">
    <location>
        <position position="104"/>
    </location>
</feature>
<feature type="modified residue" description="Phosphoserine" evidence="2">
    <location>
        <position position="107"/>
    </location>
</feature>
<feature type="modified residue" description="Phosphoserine" evidence="1">
    <location>
        <position position="112"/>
    </location>
</feature>
<feature type="modified residue" description="N6-acetyllysine" evidence="1">
    <location>
        <position position="187"/>
    </location>
</feature>
<feature type="cross-link" description="Glycyl lysine isopeptide (Lys-Gly) (interchain with G-Cter in SUMO2)" evidence="1">
    <location>
        <position position="277"/>
    </location>
</feature>
<sequence length="610" mass="67445">MAASKPVEAAMAAAAAPASGNGVGSSGGTAAPGSGAGTLPRWHVALAIGAPLLLGAGAMYLWSRRRRRREAGGRGDASGLKRNSERKTPEGRASPALGSGPDGSGDSLEMSSLDRAQAAKNKGNKYFKAGKYEQAIQCYTEAISLCPTEKNADLSTFYQNRAAAFEQLQKWKEVAQDCTKAVELNPKYVKALFRRAKAHEKLDNKKECLEDVTAVCILEGFQNEQSMLLADKVLKLLGKENAKEKYKNREPLMPSPQFIKSYFSSFTDDIISQPMLKGEKSDEDKDKEGEALEVKENSGYLKAKQYMEEENYDKIISECSKEIDAQGKYMAEALLLRATFYLLIGSANAAKPDLDKVISLKEANVKLRANALIKRGTMCMQQQQPMLSTQDFNMAAEIDPMNSDVYHHRGQLKILLDLVEEAVADFDACIRLRPKFALAQAQKCFALYRQAYTANNSSQVQAAMKGFEEVIKKFPRCAEGYALYAQALTDQQQFGKADEMYDKCIDLEPDNATTYVHKGLLQLQWKQDLDKGLELISKAIEIDNKCDFAYETMGTIEVQRGNMEKAIDMFNKAINLAKSEMEMAHLYSLCDAAHAQTEVAKKYGLKPPTL</sequence>
<comment type="function">
    <text evidence="1 5 6">Acts as a receptor of the preprotein translocase complex of the outer mitochondrial membrane (TOM complex). Recognizes and mediates the translocation of mitochondrial preproteins from the cytosol into the mitochondria in a chaperone dependent manner (PubMed:11956321, PubMed:19401463). Mediates TBK1 and IRF3 activation induced by MAVS in response to Sendai virus infection and promotes host antiviral responses during virus infection (By similarity).</text>
</comment>
<comment type="subunit">
    <text evidence="1 2">Forms part of the preprotein translocase complex of the outer mitochondrial membrane (TOM complex) which consists of at least 7 different proteins (TOMM5, TOMM6, TOMM7, TOMM20, TOMM22, TOMM40 and TOMM70) (By similarity). Interacts with CAPN8 (By similarity). Interacts with TRADD, TRAF6 and STING. Interacts with MAVS. Interacts with HSPA8 and HSP90AA1; both interactions are required for preprotein mitochondrial import. The interaction with HSP90AA1 is direct and mediates the association of TOMM70 with IRF3 and TBK1. Upon mitochondrial depolarization, interacts with PINK1; the interaction is required for PINK1-TOM-TIM23 supercomplex formation which is critical for PINK1 stabilization at the outer mitochondrial membrane, kinase activation and downstream mitophagy (By similarity).</text>
</comment>
<comment type="subcellular location">
    <subcellularLocation>
        <location evidence="5">Mitochondrion outer membrane</location>
        <topology evidence="5">Single-pass membrane protein</topology>
    </subcellularLocation>
</comment>
<comment type="similarity">
    <text evidence="7">Belongs to the Tom70 family.</text>
</comment>
<reference key="1">
    <citation type="journal article" date="2002" name="J. Cell Sci.">
        <title>Characterization of rat TOM70 as a receptor of the preprotein translocase of the mitochondrial outer membrane.</title>
        <authorList>
            <person name="Suzuki H."/>
            <person name="Maeda M."/>
            <person name="Mihara K."/>
        </authorList>
    </citation>
    <scope>NUCLEOTIDE SEQUENCE [MRNA]</scope>
    <scope>FUNCTION</scope>
    <scope>SUBCELLULAR LOCATION</scope>
</reference>
<reference key="2">
    <citation type="journal article" date="2004" name="Genome Res.">
        <title>The status, quality, and expansion of the NIH full-length cDNA project: the Mammalian Gene Collection (MGC).</title>
        <authorList>
            <consortium name="The MGC Project Team"/>
        </authorList>
    </citation>
    <scope>NUCLEOTIDE SEQUENCE [LARGE SCALE MRNA]</scope>
    <source>
        <tissue>Lung</tissue>
    </source>
</reference>
<reference key="3">
    <citation type="submission" date="2007-04" db="UniProtKB">
        <authorList>
            <person name="Lubec G."/>
            <person name="Diao W."/>
        </authorList>
    </citation>
    <scope>PROTEIN SEQUENCE OF 338-356</scope>
    <scope>IDENTIFICATION BY MASS SPECTROMETRY</scope>
    <source>
        <strain>Sprague-Dawley</strain>
        <tissue>Hippocampus</tissue>
    </source>
</reference>
<reference key="4">
    <citation type="journal article" date="2006" name="J. Proteome Res.">
        <title>Phosphoproteomic analysis of rat liver by high capacity IMAC and LC-MS/MS.</title>
        <authorList>
            <person name="Moser K."/>
            <person name="White F.M."/>
        </authorList>
    </citation>
    <scope>PHOSPHORYLATION [LARGE SCALE ANALYSIS] AT SER-94</scope>
    <scope>IDENTIFICATION BY MASS SPECTROMETRY [LARGE SCALE ANALYSIS]</scope>
</reference>
<reference key="5">
    <citation type="journal article" date="2009" name="J. Biol. Chem.">
        <title>Mitochondrial targeting of cytochrome P450 proteins containing NH2-terminal chimeric signals involves an unusual TOM20/TOM22 bypass mechanism.</title>
        <authorList>
            <person name="Anandatheerthavarada H.K."/>
            <person name="Sepuri N.B."/>
            <person name="Avadhani N.G."/>
        </authorList>
    </citation>
    <scope>FUNCTION</scope>
</reference>
<reference key="6">
    <citation type="journal article" date="2012" name="Nat. Commun.">
        <title>Quantitative maps of protein phosphorylation sites across 14 different rat organs and tissues.</title>
        <authorList>
            <person name="Lundby A."/>
            <person name="Secher A."/>
            <person name="Lage K."/>
            <person name="Nordsborg N.B."/>
            <person name="Dmytriyev A."/>
            <person name="Lundby C."/>
            <person name="Olsen J.V."/>
        </authorList>
    </citation>
    <scope>PHOSPHORYLATION [LARGE SCALE ANALYSIS] AT SER-94 AND SER-104</scope>
    <scope>IDENTIFICATION BY MASS SPECTROMETRY [LARGE SCALE ANALYSIS]</scope>
</reference>
<proteinExistence type="evidence at protein level"/>
<protein>
    <recommendedName>
        <fullName evidence="7">Mitochondrial import receptor subunit TOM70</fullName>
    </recommendedName>
    <alternativeName>
        <fullName>Mitochondrial precursor proteins import receptor</fullName>
    </alternativeName>
    <alternativeName>
        <fullName>Translocase of outer membrane 70 kDa subunit</fullName>
    </alternativeName>
    <alternativeName>
        <fullName evidence="8">Translocase of outer mitochondrial membrane protein 70</fullName>
    </alternativeName>
</protein>
<gene>
    <name evidence="8" type="primary">Tomm70</name>
    <name type="synonym">Tomm70a</name>
</gene>
<organism>
    <name type="scientific">Rattus norvegicus</name>
    <name type="common">Rat</name>
    <dbReference type="NCBI Taxonomy" id="10116"/>
    <lineage>
        <taxon>Eukaryota</taxon>
        <taxon>Metazoa</taxon>
        <taxon>Chordata</taxon>
        <taxon>Craniata</taxon>
        <taxon>Vertebrata</taxon>
        <taxon>Euteleostomi</taxon>
        <taxon>Mammalia</taxon>
        <taxon>Eutheria</taxon>
        <taxon>Euarchontoglires</taxon>
        <taxon>Glires</taxon>
        <taxon>Rodentia</taxon>
        <taxon>Myomorpha</taxon>
        <taxon>Muroidea</taxon>
        <taxon>Muridae</taxon>
        <taxon>Murinae</taxon>
        <taxon>Rattus</taxon>
    </lineage>
</organism>
<evidence type="ECO:0000250" key="1">
    <source>
        <dbReference type="UniProtKB" id="O94826"/>
    </source>
</evidence>
<evidence type="ECO:0000250" key="2">
    <source>
        <dbReference type="UniProtKB" id="Q9CZW5"/>
    </source>
</evidence>
<evidence type="ECO:0000255" key="3"/>
<evidence type="ECO:0000256" key="4">
    <source>
        <dbReference type="SAM" id="MobiDB-lite"/>
    </source>
</evidence>
<evidence type="ECO:0000269" key="5">
    <source>
    </source>
</evidence>
<evidence type="ECO:0000269" key="6">
    <source>
    </source>
</evidence>
<evidence type="ECO:0000305" key="7"/>
<evidence type="ECO:0000312" key="8">
    <source>
        <dbReference type="RGD" id="1303049"/>
    </source>
</evidence>
<evidence type="ECO:0007744" key="9">
    <source>
    </source>
</evidence>
<evidence type="ECO:0007744" key="10">
    <source>
    </source>
</evidence>
<accession>Q75Q39</accession>
<name>TOM70_RAT</name>
<dbReference type="EMBL" id="AB162856">
    <property type="protein sequence ID" value="BAD11366.1"/>
    <property type="molecule type" value="mRNA"/>
</dbReference>
<dbReference type="EMBL" id="BC098640">
    <property type="protein sequence ID" value="AAH98640.1"/>
    <property type="molecule type" value="mRNA"/>
</dbReference>
<dbReference type="RefSeq" id="NP_997684.1">
    <property type="nucleotide sequence ID" value="NM_212519.2"/>
</dbReference>
<dbReference type="SMR" id="Q75Q39"/>
<dbReference type="BioGRID" id="257743">
    <property type="interactions" value="4"/>
</dbReference>
<dbReference type="CORUM" id="Q75Q39"/>
<dbReference type="FunCoup" id="Q75Q39">
    <property type="interactions" value="2707"/>
</dbReference>
<dbReference type="IntAct" id="Q75Q39">
    <property type="interactions" value="1"/>
</dbReference>
<dbReference type="MINT" id="Q75Q39"/>
<dbReference type="STRING" id="10116.ENSRNOP00000002238"/>
<dbReference type="iPTMnet" id="Q75Q39"/>
<dbReference type="PhosphoSitePlus" id="Q75Q39"/>
<dbReference type="jPOST" id="Q75Q39"/>
<dbReference type="PaxDb" id="10116-ENSRNOP00000002238"/>
<dbReference type="Ensembl" id="ENSRNOT00000002238.7">
    <property type="protein sequence ID" value="ENSRNOP00000002238.6"/>
    <property type="gene ID" value="ENSRNOG00000001640.7"/>
</dbReference>
<dbReference type="GeneID" id="304017"/>
<dbReference type="KEGG" id="rno:304017"/>
<dbReference type="UCSC" id="RGD:1303049">
    <property type="organism name" value="rat"/>
</dbReference>
<dbReference type="AGR" id="RGD:1303049"/>
<dbReference type="CTD" id="9868"/>
<dbReference type="RGD" id="1303049">
    <property type="gene designation" value="Tomm70"/>
</dbReference>
<dbReference type="eggNOG" id="KOG0547">
    <property type="taxonomic scope" value="Eukaryota"/>
</dbReference>
<dbReference type="InParanoid" id="Q75Q39"/>
<dbReference type="OMA" id="QWRGDIE"/>
<dbReference type="OrthoDB" id="66418at2759"/>
<dbReference type="PhylomeDB" id="Q75Q39"/>
<dbReference type="TreeFam" id="TF106203"/>
<dbReference type="Reactome" id="R-RNO-168928">
    <property type="pathway name" value="DDX58/IFIH1-mediated induction of interferon-alpha/beta"/>
</dbReference>
<dbReference type="Reactome" id="R-RNO-5205685">
    <property type="pathway name" value="PINK1-PRKN Mediated Mitophagy"/>
</dbReference>
<dbReference type="Reactome" id="R-RNO-5689880">
    <property type="pathway name" value="Ub-specific processing proteases"/>
</dbReference>
<dbReference type="PRO" id="PR:Q75Q39"/>
<dbReference type="Proteomes" id="UP000002494">
    <property type="component" value="Chromosome 11"/>
</dbReference>
<dbReference type="GO" id="GO:0031966">
    <property type="term" value="C:mitochondrial membrane"/>
    <property type="evidence" value="ECO:0000266"/>
    <property type="project" value="RGD"/>
</dbReference>
<dbReference type="GO" id="GO:0005741">
    <property type="term" value="C:mitochondrial outer membrane"/>
    <property type="evidence" value="ECO:0000314"/>
    <property type="project" value="RGD"/>
</dbReference>
<dbReference type="GO" id="GO:0005739">
    <property type="term" value="C:mitochondrion"/>
    <property type="evidence" value="ECO:0000266"/>
    <property type="project" value="RGD"/>
</dbReference>
<dbReference type="GO" id="GO:0030943">
    <property type="term" value="F:mitochondrion targeting sequence binding"/>
    <property type="evidence" value="ECO:0000318"/>
    <property type="project" value="GO_Central"/>
</dbReference>
<dbReference type="GO" id="GO:0060090">
    <property type="term" value="F:molecular adaptor activity"/>
    <property type="evidence" value="ECO:0000266"/>
    <property type="project" value="RGD"/>
</dbReference>
<dbReference type="GO" id="GO:0002218">
    <property type="term" value="P:activation of innate immune response"/>
    <property type="evidence" value="ECO:0000250"/>
    <property type="project" value="UniProtKB"/>
</dbReference>
<dbReference type="GO" id="GO:0098586">
    <property type="term" value="P:cellular response to virus"/>
    <property type="evidence" value="ECO:0000250"/>
    <property type="project" value="UniProtKB"/>
</dbReference>
<dbReference type="GO" id="GO:0061052">
    <property type="term" value="P:negative regulation of cell growth involved in cardiac muscle cell development"/>
    <property type="evidence" value="ECO:0000315"/>
    <property type="project" value="RGD"/>
</dbReference>
<dbReference type="GO" id="GO:0002230">
    <property type="term" value="P:positive regulation of defense response to virus by host"/>
    <property type="evidence" value="ECO:0000250"/>
    <property type="project" value="UniProtKB"/>
</dbReference>
<dbReference type="GO" id="GO:0032728">
    <property type="term" value="P:positive regulation of interferon-beta production"/>
    <property type="evidence" value="ECO:0000250"/>
    <property type="project" value="UniProtKB"/>
</dbReference>
<dbReference type="GO" id="GO:1903955">
    <property type="term" value="P:positive regulation of protein targeting to mitochondrion"/>
    <property type="evidence" value="ECO:0000315"/>
    <property type="project" value="RGD"/>
</dbReference>
<dbReference type="GO" id="GO:0030150">
    <property type="term" value="P:protein import into mitochondrial matrix"/>
    <property type="evidence" value="ECO:0000318"/>
    <property type="project" value="GO_Central"/>
</dbReference>
<dbReference type="GO" id="GO:0045039">
    <property type="term" value="P:protein insertion into mitochondrial inner membrane"/>
    <property type="evidence" value="ECO:0000318"/>
    <property type="project" value="GO_Central"/>
</dbReference>
<dbReference type="GO" id="GO:0006626">
    <property type="term" value="P:protein targeting to mitochondrion"/>
    <property type="evidence" value="ECO:0000315"/>
    <property type="project" value="UniProtKB"/>
</dbReference>
<dbReference type="GO" id="GO:0042981">
    <property type="term" value="P:regulation of apoptotic process"/>
    <property type="evidence" value="ECO:0000250"/>
    <property type="project" value="UniProtKB"/>
</dbReference>
<dbReference type="GO" id="GO:0097068">
    <property type="term" value="P:response to thyroxine"/>
    <property type="evidence" value="ECO:0000270"/>
    <property type="project" value="RGD"/>
</dbReference>
<dbReference type="FunFam" id="1.25.40.10:FF:000141">
    <property type="entry name" value="Mitochondrial import receptor subunit TOM70"/>
    <property type="match status" value="1"/>
</dbReference>
<dbReference type="FunFam" id="1.25.40.10:FF:000071">
    <property type="entry name" value="Putative mitochondrial import receptor subunit TOM70"/>
    <property type="match status" value="1"/>
</dbReference>
<dbReference type="Gene3D" id="1.25.40.10">
    <property type="entry name" value="Tetratricopeptide repeat domain"/>
    <property type="match status" value="2"/>
</dbReference>
<dbReference type="InterPro" id="IPR011990">
    <property type="entry name" value="TPR-like_helical_dom_sf"/>
</dbReference>
<dbReference type="InterPro" id="IPR019734">
    <property type="entry name" value="TPR_rpt"/>
</dbReference>
<dbReference type="PANTHER" id="PTHR46208">
    <property type="entry name" value="MITOCHONDRIAL IMPORT RECEPTOR SUBUNIT TOM70"/>
    <property type="match status" value="1"/>
</dbReference>
<dbReference type="PANTHER" id="PTHR46208:SF1">
    <property type="entry name" value="MITOCHONDRIAL IMPORT RECEPTOR SUBUNIT TOM70"/>
    <property type="match status" value="1"/>
</dbReference>
<dbReference type="Pfam" id="PF00515">
    <property type="entry name" value="TPR_1"/>
    <property type="match status" value="1"/>
</dbReference>
<dbReference type="Pfam" id="PF13174">
    <property type="entry name" value="TPR_6"/>
    <property type="match status" value="1"/>
</dbReference>
<dbReference type="Pfam" id="PF13181">
    <property type="entry name" value="TPR_8"/>
    <property type="match status" value="3"/>
</dbReference>
<dbReference type="SMART" id="SM00028">
    <property type="entry name" value="TPR"/>
    <property type="match status" value="10"/>
</dbReference>
<dbReference type="SUPFAM" id="SSF48439">
    <property type="entry name" value="Protein prenylyltransferase"/>
    <property type="match status" value="1"/>
</dbReference>
<dbReference type="SUPFAM" id="SSF48452">
    <property type="entry name" value="TPR-like"/>
    <property type="match status" value="2"/>
</dbReference>
<dbReference type="PROSITE" id="PS50005">
    <property type="entry name" value="TPR"/>
    <property type="match status" value="7"/>
</dbReference>
<dbReference type="PROSITE" id="PS50293">
    <property type="entry name" value="TPR_REGION"/>
    <property type="match status" value="1"/>
</dbReference>
<keyword id="KW-0007">Acetylation</keyword>
<keyword id="KW-0903">Direct protein sequencing</keyword>
<keyword id="KW-1017">Isopeptide bond</keyword>
<keyword id="KW-0472">Membrane</keyword>
<keyword id="KW-0488">Methylation</keyword>
<keyword id="KW-0496">Mitochondrion</keyword>
<keyword id="KW-1000">Mitochondrion outer membrane</keyword>
<keyword id="KW-0597">Phosphoprotein</keyword>
<keyword id="KW-1185">Reference proteome</keyword>
<keyword id="KW-0677">Repeat</keyword>
<keyword id="KW-0802">TPR repeat</keyword>
<keyword id="KW-0812">Transmembrane</keyword>
<keyword id="KW-1133">Transmembrane helix</keyword>
<keyword id="KW-0832">Ubl conjugation</keyword>